<dbReference type="EC" id="2.4.2.21" evidence="1"/>
<dbReference type="EMBL" id="CP000688">
    <property type="protein sequence ID" value="ABQ17211.1"/>
    <property type="molecule type" value="Genomic_DNA"/>
</dbReference>
<dbReference type="SMR" id="A5FRG9"/>
<dbReference type="KEGG" id="deb:DehaBAV1_0626"/>
<dbReference type="PATRIC" id="fig|216389.18.peg.674"/>
<dbReference type="HOGENOM" id="CLU_002982_0_0_0"/>
<dbReference type="UniPathway" id="UPA00061">
    <property type="reaction ID" value="UER00516"/>
</dbReference>
<dbReference type="GO" id="GO:0008939">
    <property type="term" value="F:nicotinate-nucleotide-dimethylbenzimidazole phosphoribosyltransferase activity"/>
    <property type="evidence" value="ECO:0007669"/>
    <property type="project" value="UniProtKB-UniRule"/>
</dbReference>
<dbReference type="GO" id="GO:0009236">
    <property type="term" value="P:cobalamin biosynthetic process"/>
    <property type="evidence" value="ECO:0007669"/>
    <property type="project" value="UniProtKB-KW"/>
</dbReference>
<dbReference type="CDD" id="cd02439">
    <property type="entry name" value="DMB-PRT_CobT"/>
    <property type="match status" value="1"/>
</dbReference>
<dbReference type="FunFam" id="3.40.50.10210:FF:000001">
    <property type="entry name" value="Nicotinate-nucleotide--dimethylbenzimidazole phosphoribosyltransferase"/>
    <property type="match status" value="1"/>
</dbReference>
<dbReference type="Gene3D" id="1.10.1610.10">
    <property type="match status" value="1"/>
</dbReference>
<dbReference type="Gene3D" id="3.40.50.10210">
    <property type="match status" value="1"/>
</dbReference>
<dbReference type="HAMAP" id="MF_00230">
    <property type="entry name" value="CobT"/>
    <property type="match status" value="1"/>
</dbReference>
<dbReference type="InterPro" id="IPR003200">
    <property type="entry name" value="Nict_dMeBzImd_PRibTrfase"/>
</dbReference>
<dbReference type="InterPro" id="IPR017846">
    <property type="entry name" value="Nict_dMeBzImd_PRibTrfase_bact"/>
</dbReference>
<dbReference type="InterPro" id="IPR023195">
    <property type="entry name" value="Nict_dMeBzImd_PRibTrfase_N"/>
</dbReference>
<dbReference type="InterPro" id="IPR036087">
    <property type="entry name" value="Nict_dMeBzImd_PRibTrfase_sf"/>
</dbReference>
<dbReference type="NCBIfam" id="TIGR03160">
    <property type="entry name" value="cobT_DBIPRT"/>
    <property type="match status" value="1"/>
</dbReference>
<dbReference type="NCBIfam" id="NF000996">
    <property type="entry name" value="PRK00105.1"/>
    <property type="match status" value="1"/>
</dbReference>
<dbReference type="PANTHER" id="PTHR43463">
    <property type="entry name" value="NICOTINATE-NUCLEOTIDE--DIMETHYLBENZIMIDAZOLE PHOSPHORIBOSYLTRANSFERASE"/>
    <property type="match status" value="1"/>
</dbReference>
<dbReference type="PANTHER" id="PTHR43463:SF1">
    <property type="entry name" value="NICOTINATE-NUCLEOTIDE--DIMETHYLBENZIMIDAZOLE PHOSPHORIBOSYLTRANSFERASE"/>
    <property type="match status" value="1"/>
</dbReference>
<dbReference type="Pfam" id="PF02277">
    <property type="entry name" value="DBI_PRT"/>
    <property type="match status" value="1"/>
</dbReference>
<dbReference type="SUPFAM" id="SSF52733">
    <property type="entry name" value="Nicotinate mononucleotide:5,6-dimethylbenzimidazole phosphoribosyltransferase (CobT)"/>
    <property type="match status" value="1"/>
</dbReference>
<protein>
    <recommendedName>
        <fullName evidence="1">Nicotinate-nucleotide--dimethylbenzimidazole phosphoribosyltransferase</fullName>
        <shortName evidence="1">NN:DBI PRT</shortName>
        <ecNumber evidence="1">2.4.2.21</ecNumber>
    </recommendedName>
    <alternativeName>
        <fullName evidence="1">N(1)-alpha-phosphoribosyltransferase</fullName>
    </alternativeName>
</protein>
<proteinExistence type="inferred from homology"/>
<name>COBT_DEHMB</name>
<accession>A5FRG9</accession>
<feature type="chain" id="PRO_1000078241" description="Nicotinate-nucleotide--dimethylbenzimidazole phosphoribosyltransferase">
    <location>
        <begin position="1"/>
        <end position="352"/>
    </location>
</feature>
<feature type="active site" description="Proton acceptor" evidence="1">
    <location>
        <position position="318"/>
    </location>
</feature>
<reference key="1">
    <citation type="submission" date="2007-05" db="EMBL/GenBank/DDBJ databases">
        <title>Complete sequence of Dehalococcoides sp. BAV1.</title>
        <authorList>
            <consortium name="US DOE Joint Genome Institute"/>
            <person name="Copeland A."/>
            <person name="Lucas S."/>
            <person name="Lapidus A."/>
            <person name="Barry K."/>
            <person name="Detter J.C."/>
            <person name="Glavina del Rio T."/>
            <person name="Hammon N."/>
            <person name="Israni S."/>
            <person name="Pitluck S."/>
            <person name="Lowry S."/>
            <person name="Clum A."/>
            <person name="Schmutz J."/>
            <person name="Larimer F."/>
            <person name="Land M."/>
            <person name="Hauser L."/>
            <person name="Kyrpides N."/>
            <person name="Kim E."/>
            <person name="Ritalahti K.M."/>
            <person name="Loeffler F."/>
            <person name="Richardson P."/>
        </authorList>
    </citation>
    <scope>NUCLEOTIDE SEQUENCE [LARGE SCALE GENOMIC DNA]</scope>
    <source>
        <strain>ATCC BAA-2100 / JCM 16839 / KCTC 5957 / BAV1</strain>
    </source>
</reference>
<sequence>MELLNATLAKIYGLDKEAMVKAQAHQDILIKPQGSLGKLEAIVVQLAGIQGDAKPKTAKKAIITMAGDHGIIDEKFHNWPKEVTVQMLQNFAHGGAAINVLSRQVGARNVVVALGVATPMAADPNIINRNIAPGTNNMVHGPAMTREQAVKAIEVGIEIVNAEVKKGLDLVGTGDMGIGNTSPSAAICSVITGRSLEDVTGRGTGASDEQMKLKRNAIAKAISLNNPDAKDAIDVLSKVGGYEIGGLAGVILGAAANRVAVVVDGFISGAAALIAYTICPQVKDFMFAAHQSVEPGHRILLEHMGLDAILKMDMRLGEGTGAALAMNIIEAANRIQHEMASFADAGVSEKQS</sequence>
<organism>
    <name type="scientific">Dehalococcoides mccartyi (strain ATCC BAA-2100 / JCM 16839 / KCTC 5957 / BAV1)</name>
    <dbReference type="NCBI Taxonomy" id="216389"/>
    <lineage>
        <taxon>Bacteria</taxon>
        <taxon>Bacillati</taxon>
        <taxon>Chloroflexota</taxon>
        <taxon>Dehalococcoidia</taxon>
        <taxon>Dehalococcoidales</taxon>
        <taxon>Dehalococcoidaceae</taxon>
        <taxon>Dehalococcoides</taxon>
    </lineage>
</organism>
<keyword id="KW-0169">Cobalamin biosynthesis</keyword>
<keyword id="KW-0328">Glycosyltransferase</keyword>
<keyword id="KW-0808">Transferase</keyword>
<gene>
    <name evidence="1" type="primary">cobT</name>
    <name type="ordered locus">DehaBAV1_0626</name>
</gene>
<comment type="function">
    <text evidence="1">Catalyzes the synthesis of alpha-ribazole-5'-phosphate from nicotinate mononucleotide (NAMN) and 5,6-dimethylbenzimidazole (DMB).</text>
</comment>
<comment type="catalytic activity">
    <reaction evidence="1">
        <text>5,6-dimethylbenzimidazole + nicotinate beta-D-ribonucleotide = alpha-ribazole 5'-phosphate + nicotinate + H(+)</text>
        <dbReference type="Rhea" id="RHEA:11196"/>
        <dbReference type="ChEBI" id="CHEBI:15378"/>
        <dbReference type="ChEBI" id="CHEBI:15890"/>
        <dbReference type="ChEBI" id="CHEBI:32544"/>
        <dbReference type="ChEBI" id="CHEBI:57502"/>
        <dbReference type="ChEBI" id="CHEBI:57918"/>
        <dbReference type="EC" id="2.4.2.21"/>
    </reaction>
</comment>
<comment type="pathway">
    <text evidence="1">Nucleoside biosynthesis; alpha-ribazole biosynthesis; alpha-ribazole from 5,6-dimethylbenzimidazole: step 1/2.</text>
</comment>
<comment type="similarity">
    <text evidence="1">Belongs to the CobT family.</text>
</comment>
<evidence type="ECO:0000255" key="1">
    <source>
        <dbReference type="HAMAP-Rule" id="MF_00230"/>
    </source>
</evidence>